<feature type="chain" id="PRO_0000180879" description="Flagellar M-ring protein">
    <location>
        <begin position="1"/>
        <end position="556"/>
    </location>
</feature>
<feature type="transmembrane region" description="Helical" evidence="2">
    <location>
        <begin position="28"/>
        <end position="48"/>
    </location>
</feature>
<feature type="transmembrane region" description="Helical" evidence="2">
    <location>
        <begin position="459"/>
        <end position="479"/>
    </location>
</feature>
<feature type="region of interest" description="Disordered" evidence="3">
    <location>
        <begin position="298"/>
        <end position="332"/>
    </location>
</feature>
<feature type="compositionally biased region" description="Basic and acidic residues" evidence="3">
    <location>
        <begin position="306"/>
        <end position="317"/>
    </location>
</feature>
<feature type="compositionally biased region" description="Polar residues" evidence="3">
    <location>
        <begin position="320"/>
        <end position="332"/>
    </location>
</feature>
<organism>
    <name type="scientific">Buchnera aphidicola subsp. Schizaphis graminum (strain Sg)</name>
    <dbReference type="NCBI Taxonomy" id="198804"/>
    <lineage>
        <taxon>Bacteria</taxon>
        <taxon>Pseudomonadati</taxon>
        <taxon>Pseudomonadota</taxon>
        <taxon>Gammaproteobacteria</taxon>
        <taxon>Enterobacterales</taxon>
        <taxon>Erwiniaceae</taxon>
        <taxon>Buchnera</taxon>
    </lineage>
</organism>
<reference key="1">
    <citation type="journal article" date="2002" name="Science">
        <title>50 million years of genomic stasis in endosymbiotic bacteria.</title>
        <authorList>
            <person name="Tamas I."/>
            <person name="Klasson L."/>
            <person name="Canbaeck B."/>
            <person name="Naeslund A.K."/>
            <person name="Eriksson A.-S."/>
            <person name="Wernegreen J.J."/>
            <person name="Sandstroem J.P."/>
            <person name="Moran N.A."/>
            <person name="Andersson S.G.E."/>
        </authorList>
    </citation>
    <scope>NUCLEOTIDE SEQUENCE [LARGE SCALE GENOMIC DNA]</scope>
    <source>
        <strain>Sg</strain>
    </source>
</reference>
<protein>
    <recommendedName>
        <fullName>Flagellar M-ring protein</fullName>
    </recommendedName>
</protein>
<accession>Q8KA45</accession>
<keyword id="KW-0975">Bacterial flagellum</keyword>
<keyword id="KW-1003">Cell membrane</keyword>
<keyword id="KW-0472">Membrane</keyword>
<keyword id="KW-0812">Transmembrane</keyword>
<keyword id="KW-1133">Transmembrane helix</keyword>
<comment type="function">
    <text evidence="1">The M ring may be actively involved in energy transduction.</text>
</comment>
<comment type="subunit">
    <text evidence="1">The basal body constitutes a major portion of the flagellar organelle and consists of four rings (L,P,S, and M) mounted on a central rod. The M ring is integral to the inner membrane of the cell and may be connected to the flagellar rod via the S ring. The S (supramembrane ring) lies just distal to the M ring. The L and P rings lie in the outer membrane and the periplasmic space, respectively (By similarity).</text>
</comment>
<comment type="subcellular location">
    <subcellularLocation>
        <location evidence="1">Cell membrane</location>
        <topology evidence="1">Multi-pass membrane protein</topology>
    </subcellularLocation>
    <subcellularLocation>
        <location evidence="1">Bacterial flagellum basal body</location>
    </subcellularLocation>
</comment>
<comment type="similarity">
    <text evidence="4">Belongs to the FliF family.</text>
</comment>
<sequence length="556" mass="64260">MNFSTIEESVSEEKKKFNNFLSYFFKNSRVLIILFVLAVITTVSISMWRKSPDYQVLYNNLSNEDGEMIIDQLNQMQIPYKLSEDSGQLLVPKDKVYELRLHFSENNSPHRDIGYEILDKERFGVSQFGEQINYQRALEGELARTIEKINVVKNAKIHIAFPKNSLFLEDKKKPSVSVILNLKSNQGLDHSQVNAILHLISSSICDLSIENITIIDQFGKLLNNSSLGLNQIDDLKLRYSEEVESRYRNRIKNILEPLLGFNNVYAQVTAQINFNSHEKTQEKYTPNTNYKNQAIRSRQSTVNDKINNRKEENKPDELFPQTSFSSNKDLNSTTYSNKKIKKSIIQNNQDNNILHSNSAISHDDTINYELNHSLSHTKMNIGEIKRLSAAVIVNFVKDKNGKSVPINVEQIKKIKNLVREAIGYSKVRGDSVYVVNESFFQKNKNSPIKLLKDSNQSNFYSTFLTFTPWFISLFFLFFLVKKCFFSSSKNNINNQSYKNKTEEDLLEKDTKAENISELKFSKTSNTDKLIHQICNISNQNPRIIASIIRQWMSDKK</sequence>
<dbReference type="EMBL" id="AE013218">
    <property type="protein sequence ID" value="AAM67637.1"/>
    <property type="molecule type" value="Genomic_DNA"/>
</dbReference>
<dbReference type="RefSeq" id="WP_011053603.1">
    <property type="nucleotide sequence ID" value="NC_004061.1"/>
</dbReference>
<dbReference type="SMR" id="Q8KA45"/>
<dbReference type="STRING" id="198804.BUsg_067"/>
<dbReference type="GeneID" id="93003537"/>
<dbReference type="KEGG" id="bas:BUsg_067"/>
<dbReference type="eggNOG" id="COG1766">
    <property type="taxonomic scope" value="Bacteria"/>
</dbReference>
<dbReference type="HOGENOM" id="CLU_028108_1_0_6"/>
<dbReference type="Proteomes" id="UP000000416">
    <property type="component" value="Chromosome"/>
</dbReference>
<dbReference type="GO" id="GO:0009431">
    <property type="term" value="C:bacterial-type flagellum basal body, MS ring"/>
    <property type="evidence" value="ECO:0007669"/>
    <property type="project" value="InterPro"/>
</dbReference>
<dbReference type="GO" id="GO:0005886">
    <property type="term" value="C:plasma membrane"/>
    <property type="evidence" value="ECO:0007669"/>
    <property type="project" value="UniProtKB-SubCell"/>
</dbReference>
<dbReference type="GO" id="GO:0003774">
    <property type="term" value="F:cytoskeletal motor activity"/>
    <property type="evidence" value="ECO:0007669"/>
    <property type="project" value="InterPro"/>
</dbReference>
<dbReference type="GO" id="GO:0071973">
    <property type="term" value="P:bacterial-type flagellum-dependent cell motility"/>
    <property type="evidence" value="ECO:0007669"/>
    <property type="project" value="InterPro"/>
</dbReference>
<dbReference type="Gene3D" id="3.30.300.30">
    <property type="match status" value="1"/>
</dbReference>
<dbReference type="InterPro" id="IPR045851">
    <property type="entry name" value="AMP-bd_C_sf"/>
</dbReference>
<dbReference type="InterPro" id="IPR013556">
    <property type="entry name" value="Flag_M-ring_C"/>
</dbReference>
<dbReference type="InterPro" id="IPR000067">
    <property type="entry name" value="FlgMring_FliF"/>
</dbReference>
<dbReference type="InterPro" id="IPR006182">
    <property type="entry name" value="FliF_N_dom"/>
</dbReference>
<dbReference type="InterPro" id="IPR043427">
    <property type="entry name" value="YscJ/FliF"/>
</dbReference>
<dbReference type="NCBIfam" id="TIGR00206">
    <property type="entry name" value="fliF"/>
    <property type="match status" value="1"/>
</dbReference>
<dbReference type="PANTHER" id="PTHR30046">
    <property type="entry name" value="FLAGELLAR M-RING PROTEIN"/>
    <property type="match status" value="1"/>
</dbReference>
<dbReference type="PANTHER" id="PTHR30046:SF0">
    <property type="entry name" value="FLAGELLAR M-RING PROTEIN"/>
    <property type="match status" value="1"/>
</dbReference>
<dbReference type="Pfam" id="PF01514">
    <property type="entry name" value="YscJ_FliF"/>
    <property type="match status" value="1"/>
</dbReference>
<dbReference type="Pfam" id="PF08345">
    <property type="entry name" value="YscJ_FliF_C"/>
    <property type="match status" value="1"/>
</dbReference>
<dbReference type="PIRSF" id="PIRSF004862">
    <property type="entry name" value="FliF"/>
    <property type="match status" value="1"/>
</dbReference>
<dbReference type="PRINTS" id="PR01009">
    <property type="entry name" value="FLGMRINGFLIF"/>
</dbReference>
<proteinExistence type="inferred from homology"/>
<name>FLIF_BUCAP</name>
<evidence type="ECO:0000250" key="1"/>
<evidence type="ECO:0000255" key="2"/>
<evidence type="ECO:0000256" key="3">
    <source>
        <dbReference type="SAM" id="MobiDB-lite"/>
    </source>
</evidence>
<evidence type="ECO:0000305" key="4"/>
<gene>
    <name type="primary">fliF</name>
    <name type="ordered locus">BUsg_067</name>
</gene>